<gene>
    <name evidence="1" type="primary">nuoN</name>
    <name type="ordered locus">PA2649</name>
</gene>
<dbReference type="EC" id="7.1.1.-" evidence="1"/>
<dbReference type="EMBL" id="AE004091">
    <property type="protein sequence ID" value="AAG06037.1"/>
    <property type="molecule type" value="Genomic_DNA"/>
</dbReference>
<dbReference type="PIR" id="F83315">
    <property type="entry name" value="F83315"/>
</dbReference>
<dbReference type="RefSeq" id="NP_251339.1">
    <property type="nucleotide sequence ID" value="NC_002516.2"/>
</dbReference>
<dbReference type="RefSeq" id="WP_003090482.1">
    <property type="nucleotide sequence ID" value="NZ_QZGE01000008.1"/>
</dbReference>
<dbReference type="SMR" id="Q9I0I9"/>
<dbReference type="FunCoup" id="Q9I0I9">
    <property type="interactions" value="155"/>
</dbReference>
<dbReference type="STRING" id="208964.PA2649"/>
<dbReference type="PaxDb" id="208964-PA2649"/>
<dbReference type="GeneID" id="882358"/>
<dbReference type="KEGG" id="pae:PA2649"/>
<dbReference type="PATRIC" id="fig|208964.12.peg.2772"/>
<dbReference type="PseudoCAP" id="PA2649"/>
<dbReference type="HOGENOM" id="CLU_007100_1_5_6"/>
<dbReference type="InParanoid" id="Q9I0I9"/>
<dbReference type="OrthoDB" id="9768329at2"/>
<dbReference type="PhylomeDB" id="Q9I0I9"/>
<dbReference type="BioCyc" id="PAER208964:G1FZ6-2689-MONOMER"/>
<dbReference type="Proteomes" id="UP000002438">
    <property type="component" value="Chromosome"/>
</dbReference>
<dbReference type="GO" id="GO:0005886">
    <property type="term" value="C:plasma membrane"/>
    <property type="evidence" value="ECO:0007669"/>
    <property type="project" value="UniProtKB-SubCell"/>
</dbReference>
<dbReference type="GO" id="GO:0008137">
    <property type="term" value="F:NADH dehydrogenase (ubiquinone) activity"/>
    <property type="evidence" value="ECO:0007669"/>
    <property type="project" value="InterPro"/>
</dbReference>
<dbReference type="GO" id="GO:0050136">
    <property type="term" value="F:NADH:ubiquinone reductase (non-electrogenic) activity"/>
    <property type="evidence" value="ECO:0007669"/>
    <property type="project" value="UniProtKB-UniRule"/>
</dbReference>
<dbReference type="GO" id="GO:0048038">
    <property type="term" value="F:quinone binding"/>
    <property type="evidence" value="ECO:0007669"/>
    <property type="project" value="UniProtKB-KW"/>
</dbReference>
<dbReference type="GO" id="GO:0042773">
    <property type="term" value="P:ATP synthesis coupled electron transport"/>
    <property type="evidence" value="ECO:0007669"/>
    <property type="project" value="InterPro"/>
</dbReference>
<dbReference type="GO" id="GO:0071236">
    <property type="term" value="P:cellular response to antibiotic"/>
    <property type="evidence" value="ECO:0000315"/>
    <property type="project" value="PseudoCAP"/>
</dbReference>
<dbReference type="HAMAP" id="MF_00445">
    <property type="entry name" value="NDH1_NuoN_1"/>
    <property type="match status" value="1"/>
</dbReference>
<dbReference type="InterPro" id="IPR010096">
    <property type="entry name" value="NADH-Q_OxRdtase_suN/2"/>
</dbReference>
<dbReference type="InterPro" id="IPR001750">
    <property type="entry name" value="ND/Mrp_TM"/>
</dbReference>
<dbReference type="NCBIfam" id="TIGR01770">
    <property type="entry name" value="NDH_I_N"/>
    <property type="match status" value="1"/>
</dbReference>
<dbReference type="NCBIfam" id="NF004439">
    <property type="entry name" value="PRK05777.1-1"/>
    <property type="match status" value="1"/>
</dbReference>
<dbReference type="PANTHER" id="PTHR22773">
    <property type="entry name" value="NADH DEHYDROGENASE"/>
    <property type="match status" value="1"/>
</dbReference>
<dbReference type="Pfam" id="PF00361">
    <property type="entry name" value="Proton_antipo_M"/>
    <property type="match status" value="1"/>
</dbReference>
<reference key="1">
    <citation type="journal article" date="2000" name="Nature">
        <title>Complete genome sequence of Pseudomonas aeruginosa PAO1, an opportunistic pathogen.</title>
        <authorList>
            <person name="Stover C.K."/>
            <person name="Pham X.-Q.T."/>
            <person name="Erwin A.L."/>
            <person name="Mizoguchi S.D."/>
            <person name="Warrener P."/>
            <person name="Hickey M.J."/>
            <person name="Brinkman F.S.L."/>
            <person name="Hufnagle W.O."/>
            <person name="Kowalik D.J."/>
            <person name="Lagrou M."/>
            <person name="Garber R.L."/>
            <person name="Goltry L."/>
            <person name="Tolentino E."/>
            <person name="Westbrock-Wadman S."/>
            <person name="Yuan Y."/>
            <person name="Brody L.L."/>
            <person name="Coulter S.N."/>
            <person name="Folger K.R."/>
            <person name="Kas A."/>
            <person name="Larbig K."/>
            <person name="Lim R.M."/>
            <person name="Smith K.A."/>
            <person name="Spencer D.H."/>
            <person name="Wong G.K.-S."/>
            <person name="Wu Z."/>
            <person name="Paulsen I.T."/>
            <person name="Reizer J."/>
            <person name="Saier M.H. Jr."/>
            <person name="Hancock R.E.W."/>
            <person name="Lory S."/>
            <person name="Olson M.V."/>
        </authorList>
    </citation>
    <scope>NUCLEOTIDE SEQUENCE [LARGE SCALE GENOMIC DNA]</scope>
    <source>
        <strain>ATCC 15692 / DSM 22644 / CIP 104116 / JCM 14847 / LMG 12228 / 1C / PRS 101 / PAO1</strain>
    </source>
</reference>
<name>NUON_PSEAE</name>
<proteinExistence type="inferred from homology"/>
<organism>
    <name type="scientific">Pseudomonas aeruginosa (strain ATCC 15692 / DSM 22644 / CIP 104116 / JCM 14847 / LMG 12228 / 1C / PRS 101 / PAO1)</name>
    <dbReference type="NCBI Taxonomy" id="208964"/>
    <lineage>
        <taxon>Bacteria</taxon>
        <taxon>Pseudomonadati</taxon>
        <taxon>Pseudomonadota</taxon>
        <taxon>Gammaproteobacteria</taxon>
        <taxon>Pseudomonadales</taxon>
        <taxon>Pseudomonadaceae</taxon>
        <taxon>Pseudomonas</taxon>
    </lineage>
</organism>
<keyword id="KW-0997">Cell inner membrane</keyword>
<keyword id="KW-1003">Cell membrane</keyword>
<keyword id="KW-0472">Membrane</keyword>
<keyword id="KW-0520">NAD</keyword>
<keyword id="KW-0874">Quinone</keyword>
<keyword id="KW-1185">Reference proteome</keyword>
<keyword id="KW-1278">Translocase</keyword>
<keyword id="KW-0812">Transmembrane</keyword>
<keyword id="KW-1133">Transmembrane helix</keyword>
<keyword id="KW-0813">Transport</keyword>
<keyword id="KW-0830">Ubiquinone</keyword>
<evidence type="ECO:0000255" key="1">
    <source>
        <dbReference type="HAMAP-Rule" id="MF_00445"/>
    </source>
</evidence>
<comment type="function">
    <text evidence="1">NDH-1 shuttles electrons from NADH, via FMN and iron-sulfur (Fe-S) centers, to quinones in the respiratory chain. The immediate electron acceptor for the enzyme in this species is believed to be ubiquinone. Couples the redox reaction to proton translocation (for every two electrons transferred, four hydrogen ions are translocated across the cytoplasmic membrane), and thus conserves the redox energy in a proton gradient.</text>
</comment>
<comment type="catalytic activity">
    <reaction evidence="1">
        <text>a quinone + NADH + 5 H(+)(in) = a quinol + NAD(+) + 4 H(+)(out)</text>
        <dbReference type="Rhea" id="RHEA:57888"/>
        <dbReference type="ChEBI" id="CHEBI:15378"/>
        <dbReference type="ChEBI" id="CHEBI:24646"/>
        <dbReference type="ChEBI" id="CHEBI:57540"/>
        <dbReference type="ChEBI" id="CHEBI:57945"/>
        <dbReference type="ChEBI" id="CHEBI:132124"/>
    </reaction>
</comment>
<comment type="subunit">
    <text evidence="1">NDH-1 is composed of 13 different subunits. Subunits NuoA, H, J, K, L, M, N constitute the membrane sector of the complex.</text>
</comment>
<comment type="subcellular location">
    <subcellularLocation>
        <location evidence="1">Cell inner membrane</location>
        <topology evidence="1">Multi-pass membrane protein</topology>
    </subcellularLocation>
</comment>
<comment type="similarity">
    <text evidence="1">Belongs to the complex I subunit 2 family.</text>
</comment>
<feature type="chain" id="PRO_0000287832" description="NADH-quinone oxidoreductase subunit N">
    <location>
        <begin position="1"/>
        <end position="486"/>
    </location>
</feature>
<feature type="transmembrane region" description="Helical" evidence="1">
    <location>
        <begin position="8"/>
        <end position="28"/>
    </location>
</feature>
<feature type="transmembrane region" description="Helical" evidence="1">
    <location>
        <begin position="38"/>
        <end position="58"/>
    </location>
</feature>
<feature type="transmembrane region" description="Helical" evidence="1">
    <location>
        <begin position="73"/>
        <end position="93"/>
    </location>
</feature>
<feature type="transmembrane region" description="Helical" evidence="1">
    <location>
        <begin position="105"/>
        <end position="125"/>
    </location>
</feature>
<feature type="transmembrane region" description="Helical" evidence="1">
    <location>
        <begin position="128"/>
        <end position="148"/>
    </location>
</feature>
<feature type="transmembrane region" description="Helical" evidence="1">
    <location>
        <begin position="169"/>
        <end position="189"/>
    </location>
</feature>
<feature type="transmembrane region" description="Helical" evidence="1">
    <location>
        <begin position="196"/>
        <end position="216"/>
    </location>
</feature>
<feature type="transmembrane region" description="Helical" evidence="1">
    <location>
        <begin position="235"/>
        <end position="255"/>
    </location>
</feature>
<feature type="transmembrane region" description="Helical" evidence="1">
    <location>
        <begin position="269"/>
        <end position="289"/>
    </location>
</feature>
<feature type="transmembrane region" description="Helical" evidence="1">
    <location>
        <begin position="304"/>
        <end position="324"/>
    </location>
</feature>
<feature type="transmembrane region" description="Helical" evidence="1">
    <location>
        <begin position="325"/>
        <end position="345"/>
    </location>
</feature>
<feature type="transmembrane region" description="Helical" evidence="1">
    <location>
        <begin position="373"/>
        <end position="393"/>
    </location>
</feature>
<feature type="transmembrane region" description="Helical" evidence="1">
    <location>
        <begin position="405"/>
        <end position="427"/>
    </location>
</feature>
<feature type="transmembrane region" description="Helical" evidence="1">
    <location>
        <begin position="454"/>
        <end position="474"/>
    </location>
</feature>
<accession>Q9I0I9</accession>
<sequence>MTFTIQHFIALLPLLITSATLVVVMLAVAWKRNHSFTATLSVIGLNLALLSLLPVLGVTPIEVTPLVLVDNYACFYMALVLVSALACVTLAHAYMESYPGNREELYLLLLLATAGGLVLVSAQHLASLFIGLELLSVPVYGMVAYAFFNKRSLEAGIKYTVLSAAGSAFLLFGMALLYAESGTLGFAGLGAKVAEHVLSGPLVSVGVGMMLVGLGFKLSLVPFHLWTPDVYEGAPAPVSAFLATASKVAVFAVLLRLFQIAPAALDNQLLNISLSVIAVASILFGNLLALTQSNIKRLLGYSSIAHLGYLLVALIASKGMAVEAVGVYLATYVLTSLGAFGVITLMSTPYSGRDADALFEYRGLFWRRPVLTAVMTVMMLSLAGIPLTAGFIGKFYVIAVGVESHLWWLIGALVLGSAIGLYYYLRVMVTLFLVEPGIRQHDAPFNWGQRAGGIMLVAIALLAFFLGVYPQPLLEILQHSGLALAG</sequence>
<protein>
    <recommendedName>
        <fullName evidence="1">NADH-quinone oxidoreductase subunit N</fullName>
        <ecNumber evidence="1">7.1.1.-</ecNumber>
    </recommendedName>
    <alternativeName>
        <fullName evidence="1">NADH dehydrogenase I subunit N</fullName>
    </alternativeName>
    <alternativeName>
        <fullName evidence="1">NDH-1 subunit N</fullName>
    </alternativeName>
</protein>